<evidence type="ECO:0000250" key="1">
    <source>
        <dbReference type="UniProtKB" id="P50389"/>
    </source>
</evidence>
<evidence type="ECO:0000255" key="2">
    <source>
        <dbReference type="HAMAP-Rule" id="MF_01627"/>
    </source>
</evidence>
<feature type="chain" id="PRO_1000186179" description="Purine nucleoside phosphorylase DeoD-type">
    <location>
        <begin position="1"/>
        <end position="235"/>
    </location>
</feature>
<feature type="active site" description="Proton donor" evidence="2">
    <location>
        <position position="204"/>
    </location>
</feature>
<feature type="binding site" evidence="1">
    <location>
        <position position="4"/>
    </location>
    <ligand>
        <name>a purine D-ribonucleoside</name>
        <dbReference type="ChEBI" id="CHEBI:142355"/>
        <note>ligand shared between dimeric partners</note>
    </ligand>
</feature>
<feature type="binding site" description="in other chain" evidence="1">
    <location>
        <position position="20"/>
    </location>
    <ligand>
        <name>phosphate</name>
        <dbReference type="ChEBI" id="CHEBI:43474"/>
        <note>ligand shared between dimeric partners</note>
    </ligand>
</feature>
<feature type="binding site" description="in other chain" evidence="1">
    <location>
        <position position="24"/>
    </location>
    <ligand>
        <name>phosphate</name>
        <dbReference type="ChEBI" id="CHEBI:43474"/>
        <note>ligand shared between dimeric partners</note>
    </ligand>
</feature>
<feature type="binding site" evidence="1">
    <location>
        <position position="43"/>
    </location>
    <ligand>
        <name>phosphate</name>
        <dbReference type="ChEBI" id="CHEBI:43474"/>
        <note>ligand shared between dimeric partners</note>
    </ligand>
</feature>
<feature type="binding site" description="in other chain" evidence="1">
    <location>
        <begin position="87"/>
        <end position="90"/>
    </location>
    <ligand>
        <name>phosphate</name>
        <dbReference type="ChEBI" id="CHEBI:43474"/>
        <note>ligand shared between dimeric partners</note>
    </ligand>
</feature>
<feature type="binding site" description="in other chain" evidence="1">
    <location>
        <begin position="179"/>
        <end position="181"/>
    </location>
    <ligand>
        <name>a purine D-ribonucleoside</name>
        <dbReference type="ChEBI" id="CHEBI:142355"/>
        <note>ligand shared between dimeric partners</note>
    </ligand>
</feature>
<feature type="binding site" description="in other chain" evidence="1">
    <location>
        <begin position="203"/>
        <end position="204"/>
    </location>
    <ligand>
        <name>a purine D-ribonucleoside</name>
        <dbReference type="ChEBI" id="CHEBI:142355"/>
        <note>ligand shared between dimeric partners</note>
    </ligand>
</feature>
<feature type="site" description="Important for catalytic activity" evidence="2">
    <location>
        <position position="217"/>
    </location>
</feature>
<protein>
    <recommendedName>
        <fullName evidence="2">Purine nucleoside phosphorylase DeoD-type</fullName>
        <shortName evidence="2">PNP</shortName>
        <ecNumber evidence="2">2.4.2.1</ecNumber>
    </recommendedName>
</protein>
<comment type="function">
    <text evidence="2">Catalyzes the reversible phosphorolytic breakdown of the N-glycosidic bond in the beta-(deoxy)ribonucleoside molecules, with the formation of the corresponding free purine bases and pentose-1-phosphate.</text>
</comment>
<comment type="catalytic activity">
    <reaction evidence="2">
        <text>a purine D-ribonucleoside + phosphate = a purine nucleobase + alpha-D-ribose 1-phosphate</text>
        <dbReference type="Rhea" id="RHEA:19805"/>
        <dbReference type="ChEBI" id="CHEBI:26386"/>
        <dbReference type="ChEBI" id="CHEBI:43474"/>
        <dbReference type="ChEBI" id="CHEBI:57720"/>
        <dbReference type="ChEBI" id="CHEBI:142355"/>
        <dbReference type="EC" id="2.4.2.1"/>
    </reaction>
</comment>
<comment type="catalytic activity">
    <reaction evidence="2">
        <text>a purine 2'-deoxy-D-ribonucleoside + phosphate = a purine nucleobase + 2-deoxy-alpha-D-ribose 1-phosphate</text>
        <dbReference type="Rhea" id="RHEA:36431"/>
        <dbReference type="ChEBI" id="CHEBI:26386"/>
        <dbReference type="ChEBI" id="CHEBI:43474"/>
        <dbReference type="ChEBI" id="CHEBI:57259"/>
        <dbReference type="ChEBI" id="CHEBI:142361"/>
        <dbReference type="EC" id="2.4.2.1"/>
    </reaction>
</comment>
<comment type="subunit">
    <text evidence="2">Homohexamer; trimer of homodimers.</text>
</comment>
<comment type="similarity">
    <text evidence="2">Belongs to the PNP/UDP phosphorylase family.</text>
</comment>
<keyword id="KW-0328">Glycosyltransferase</keyword>
<keyword id="KW-0808">Transferase</keyword>
<sequence>MSVHIEAKQGEIAESILLPGDPLRAKYIAETFLEDVTCYNNVRGMLGFTGTYKGKRVSVQGTGMGVPSISIYVNELIQSYGVKNLIRVGTCGAIQKDVKVRDVIIAMTACTDSNMNRLTFPGFDFAPAANFDLLKKAYDAGTEKGLHVRVGNVLTADVFYRESMDMVKKLGDYGVLAVEMETTALYTLAAKYGVNALSVLTVSDHIFTGEETTSEERQTTFNEMIEIALDAAIQQ</sequence>
<organism>
    <name type="scientific">Bacillus mycoides (strain KBAB4)</name>
    <name type="common">Bacillus weihenstephanensis</name>
    <dbReference type="NCBI Taxonomy" id="315730"/>
    <lineage>
        <taxon>Bacteria</taxon>
        <taxon>Bacillati</taxon>
        <taxon>Bacillota</taxon>
        <taxon>Bacilli</taxon>
        <taxon>Bacillales</taxon>
        <taxon>Bacillaceae</taxon>
        <taxon>Bacillus</taxon>
        <taxon>Bacillus cereus group</taxon>
    </lineage>
</organism>
<accession>A9VLN1</accession>
<dbReference type="EC" id="2.4.2.1" evidence="2"/>
<dbReference type="EMBL" id="CP000903">
    <property type="protein sequence ID" value="ABY42633.1"/>
    <property type="molecule type" value="Genomic_DNA"/>
</dbReference>
<dbReference type="RefSeq" id="WP_000110707.1">
    <property type="nucleotide sequence ID" value="NC_010184.1"/>
</dbReference>
<dbReference type="SMR" id="A9VLN1"/>
<dbReference type="GeneID" id="93009578"/>
<dbReference type="KEGG" id="bwe:BcerKBAB4_1386"/>
<dbReference type="eggNOG" id="COG0813">
    <property type="taxonomic scope" value="Bacteria"/>
</dbReference>
<dbReference type="HOGENOM" id="CLU_068457_2_0_9"/>
<dbReference type="Proteomes" id="UP000002154">
    <property type="component" value="Chromosome"/>
</dbReference>
<dbReference type="GO" id="GO:0005829">
    <property type="term" value="C:cytosol"/>
    <property type="evidence" value="ECO:0007669"/>
    <property type="project" value="TreeGrafter"/>
</dbReference>
<dbReference type="GO" id="GO:0004731">
    <property type="term" value="F:purine-nucleoside phosphorylase activity"/>
    <property type="evidence" value="ECO:0007669"/>
    <property type="project" value="UniProtKB-UniRule"/>
</dbReference>
<dbReference type="GO" id="GO:0006152">
    <property type="term" value="P:purine nucleoside catabolic process"/>
    <property type="evidence" value="ECO:0007669"/>
    <property type="project" value="TreeGrafter"/>
</dbReference>
<dbReference type="CDD" id="cd09006">
    <property type="entry name" value="PNP_EcPNPI-like"/>
    <property type="match status" value="1"/>
</dbReference>
<dbReference type="Gene3D" id="3.40.50.1580">
    <property type="entry name" value="Nucleoside phosphorylase domain"/>
    <property type="match status" value="1"/>
</dbReference>
<dbReference type="HAMAP" id="MF_01627">
    <property type="entry name" value="Pur_nucleosid_phosp"/>
    <property type="match status" value="1"/>
</dbReference>
<dbReference type="InterPro" id="IPR004402">
    <property type="entry name" value="DeoD-type"/>
</dbReference>
<dbReference type="InterPro" id="IPR018016">
    <property type="entry name" value="Nucleoside_phosphorylase_CS"/>
</dbReference>
<dbReference type="InterPro" id="IPR000845">
    <property type="entry name" value="Nucleoside_phosphorylase_d"/>
</dbReference>
<dbReference type="InterPro" id="IPR035994">
    <property type="entry name" value="Nucleoside_phosphorylase_sf"/>
</dbReference>
<dbReference type="NCBIfam" id="TIGR00107">
    <property type="entry name" value="deoD"/>
    <property type="match status" value="1"/>
</dbReference>
<dbReference type="NCBIfam" id="NF004489">
    <property type="entry name" value="PRK05819.1"/>
    <property type="match status" value="1"/>
</dbReference>
<dbReference type="NCBIfam" id="NF009914">
    <property type="entry name" value="PRK13374.1"/>
    <property type="match status" value="1"/>
</dbReference>
<dbReference type="PANTHER" id="PTHR43691:SF11">
    <property type="entry name" value="FI09636P-RELATED"/>
    <property type="match status" value="1"/>
</dbReference>
<dbReference type="PANTHER" id="PTHR43691">
    <property type="entry name" value="URIDINE PHOSPHORYLASE"/>
    <property type="match status" value="1"/>
</dbReference>
<dbReference type="Pfam" id="PF01048">
    <property type="entry name" value="PNP_UDP_1"/>
    <property type="match status" value="1"/>
</dbReference>
<dbReference type="SUPFAM" id="SSF53167">
    <property type="entry name" value="Purine and uridine phosphorylases"/>
    <property type="match status" value="1"/>
</dbReference>
<dbReference type="PROSITE" id="PS01232">
    <property type="entry name" value="PNP_UDP_1"/>
    <property type="match status" value="1"/>
</dbReference>
<gene>
    <name evidence="2" type="primary">deoD</name>
    <name type="ordered locus">BcerKBAB4_1386</name>
</gene>
<name>DEOD_BACMK</name>
<proteinExistence type="inferred from homology"/>
<reference key="1">
    <citation type="journal article" date="2008" name="Chem. Biol. Interact.">
        <title>Extending the Bacillus cereus group genomics to putative food-borne pathogens of different toxicity.</title>
        <authorList>
            <person name="Lapidus A."/>
            <person name="Goltsman E."/>
            <person name="Auger S."/>
            <person name="Galleron N."/>
            <person name="Segurens B."/>
            <person name="Dossat C."/>
            <person name="Land M.L."/>
            <person name="Broussolle V."/>
            <person name="Brillard J."/>
            <person name="Guinebretiere M.-H."/>
            <person name="Sanchis V."/>
            <person name="Nguen-the C."/>
            <person name="Lereclus D."/>
            <person name="Richardson P."/>
            <person name="Wincker P."/>
            <person name="Weissenbach J."/>
            <person name="Ehrlich S.D."/>
            <person name="Sorokin A."/>
        </authorList>
    </citation>
    <scope>NUCLEOTIDE SEQUENCE [LARGE SCALE GENOMIC DNA]</scope>
    <source>
        <strain>KBAB4</strain>
    </source>
</reference>